<accession>O07295</accession>
<accession>Q7V259</accession>
<feature type="chain" id="PRO_0000077548" description="Divinyl chlorophyll a/b light-harvesting protein PcbA">
    <location>
        <begin position="1"/>
        <end position="352"/>
    </location>
</feature>
<feature type="transmembrane region" description="Helical" evidence="1">
    <location>
        <begin position="27"/>
        <end position="47"/>
    </location>
</feature>
<feature type="transmembrane region" description="Helical" evidence="1">
    <location>
        <begin position="90"/>
        <end position="110"/>
    </location>
</feature>
<feature type="transmembrane region" description="Helical" evidence="1">
    <location>
        <begin position="142"/>
        <end position="162"/>
    </location>
</feature>
<feature type="transmembrane region" description="Helical" evidence="1">
    <location>
        <begin position="203"/>
        <end position="223"/>
    </location>
</feature>
<feature type="transmembrane region" description="Helical" evidence="1">
    <location>
        <begin position="243"/>
        <end position="263"/>
    </location>
</feature>
<feature type="transmembrane region" description="Helical" evidence="1">
    <location>
        <begin position="306"/>
        <end position="326"/>
    </location>
</feature>
<feature type="sequence conflict" description="In Ref. 1; AA sequence." evidence="7" ref="1">
    <original>T</original>
    <variation>V</variation>
    <location>
        <position position="9"/>
    </location>
</feature>
<keyword id="KW-0148">Chlorophyll</keyword>
<keyword id="KW-0157">Chromophore</keyword>
<keyword id="KW-0903">Direct protein sequencing</keyword>
<keyword id="KW-0472">Membrane</keyword>
<keyword id="KW-0602">Photosynthesis</keyword>
<keyword id="KW-0603">Photosystem I</keyword>
<keyword id="KW-0604">Photosystem II</keyword>
<keyword id="KW-0793">Thylakoid</keyword>
<keyword id="KW-0812">Transmembrane</keyword>
<keyword id="KW-1133">Transmembrane helix</keyword>
<comment type="function">
    <text evidence="5 6">The antenna complex functions as a light receptor, it captures and delivers excitation energy to photosystem II and possibly to photosystem I. The Prochlorales pcb genes are not related to higher plant LHCs.</text>
</comment>
<comment type="cofactor">
    <cofactor evidence="3">
        <name>divinyl chlorophyll a</name>
        <dbReference type="ChEBI" id="CHEBI:73095"/>
    </cofactor>
</comment>
<comment type="cofactor">
    <cofactor evidence="3">
        <name>divinyl chlorophyll b</name>
        <dbReference type="ChEBI" id="CHEBI:73096"/>
    </cofactor>
</comment>
<comment type="subunit">
    <text evidence="2">The antenna complex consists of divinyl chlorophylls (a and b) and divinyl chlorophyll a/b binding proteins and binds less divinyl chlorophyll b than does low-light-adapted Prochlorococcus. Also forms complexes with PSII, consisting of a PSII dimer and 4 or 8 PcbA subunits. These complexes are also found under conditions of iron-starvation.</text>
</comment>
<comment type="subcellular location">
    <subcellularLocation>
        <location evidence="2 3">Cellular thylakoid membrane</location>
        <topology evidence="8 9">Multi-pass membrane protein</topology>
    </subcellularLocation>
</comment>
<comment type="induction">
    <text evidence="2">As the light levels increase antenna complex levels decrease. Transcript expression level is unaffected by iron concentration.</text>
</comment>
<comment type="miscellaneous">
    <text evidence="4">This high-light-adapted strain contains only 1 pcb gene.</text>
</comment>
<comment type="similarity">
    <text evidence="7">Belongs to the PsbB/PsbC family. IsiA/Pcb subfamily.</text>
</comment>
<protein>
    <recommendedName>
        <fullName>Divinyl chlorophyll a/b light-harvesting protein PcbA</fullName>
    </recommendedName>
</protein>
<gene>
    <name type="primary">pcbA</name>
    <name type="synonym">pcb</name>
    <name type="ordered locus">PMM0627</name>
</gene>
<reference key="1">
    <citation type="journal article" date="1996" name="Proc. Natl. Acad. Sci. U.S.A.">
        <title>Independent evolution of the prochlorophyte and green plant chlorophyll a/b light-harvesting proteins.</title>
        <authorList>
            <person name="La Roche J."/>
            <person name="van der Staay G.W.M."/>
            <person name="Partensky F."/>
            <person name="Ducret A."/>
            <person name="Aebersold R.R."/>
            <person name="Li R."/>
            <person name="Golden S.S."/>
            <person name="Hiller R.G."/>
            <person name="Wrench P.M."/>
            <person name="Larkum A.W.D."/>
            <person name="Green B.R."/>
        </authorList>
    </citation>
    <scope>NUCLEOTIDE SEQUENCE [GENOMIC DNA]</scope>
    <scope>PROTEIN SEQUENCE OF 1-17</scope>
    <scope>FUNCTION</scope>
</reference>
<reference key="2">
    <citation type="journal article" date="2003" name="Nature">
        <title>Genome divergence in two Prochlorococcus ecotypes reflects oceanic niche differentiation.</title>
        <authorList>
            <person name="Rocap G."/>
            <person name="Larimer F.W."/>
            <person name="Lamerdin J.E."/>
            <person name="Malfatti S."/>
            <person name="Chain P."/>
            <person name="Ahlgren N.A."/>
            <person name="Arellano A."/>
            <person name="Coleman M."/>
            <person name="Hauser L."/>
            <person name="Hess W.R."/>
            <person name="Johnson Z.I."/>
            <person name="Land M.L."/>
            <person name="Lindell D."/>
            <person name="Post A.F."/>
            <person name="Regala W."/>
            <person name="Shah M."/>
            <person name="Shaw S.L."/>
            <person name="Steglich C."/>
            <person name="Sullivan M.B."/>
            <person name="Ting C.S."/>
            <person name="Tolonen A."/>
            <person name="Webb E.A."/>
            <person name="Zinser E.R."/>
            <person name="Chisholm S.W."/>
        </authorList>
    </citation>
    <scope>NUCLEOTIDE SEQUENCE [LARGE SCALE GENOMIC DNA]</scope>
    <source>
        <strain>CCMP1986 / NIES-2087 / MED4</strain>
    </source>
</reference>
<reference key="3">
    <citation type="journal article" date="1997" name="Photosyn. Res.">
        <title>The divinyl-chlorophyll a/b-protein complexes of two strains of the oxyphototrophic marine prokaryote Prochlorococcus -- characterization and response to changes in growth irradiance.</title>
        <authorList>
            <person name="Partensky F."/>
            <person name="La Roche J."/>
            <person name="Wyman K."/>
            <person name="Falkowski P.G."/>
        </authorList>
    </citation>
    <scope>FUNCTION</scope>
    <scope>CHARACTERIZATION OF ENERGETIC COUPLING</scope>
    <scope>CHLOROPHYLL-BINDING</scope>
    <scope>COFACTOR</scope>
    <scope>SUBCELLULAR LOCATION</scope>
</reference>
<reference key="4">
    <citation type="journal article" date="2003" name="Nature">
        <title>Low-light-adapted Prochlorococcus species possess specific antennae for each photosystem.</title>
        <authorList>
            <person name="Bibby T.S."/>
            <person name="Mary I."/>
            <person name="Nield J."/>
            <person name="Partensky F."/>
            <person name="Barber J."/>
        </authorList>
    </citation>
    <scope>SUBCELLULAR LOCATION</scope>
    <scope>INDUCTION</scope>
    <scope>INVOLVEMENT IN COMPLEXES WITH PHOTOSYSTEM II</scope>
    <scope>SUBUNIT</scope>
</reference>
<sequence length="352" mass="38660">MQTYGNPDTTYGWWAGNSGVANRSGKFIAAHVAHAGLIVFWAGAFTLFELSRFDPSVPMGQQPLIALPHLATLGIGFDADGVLMGDTKPVLAIAIVHLVSSMVLAAGGLLHSLLLPGNLEESEVAKARKFNIEWDNPDKLTFILGHHLIILGFAVILLVEWARVHGVYDPAIGAVRQVEYDLNLAEIWNHQTDFLLIDDLEDVMGGHAFLAFVLITGGAWHIATKQVGEYTKFKGKGLLSAEAVLSWSLAGIGWMAIIAAFWSASNTTVYPVEFFGEPLELKFSISPYWIDTVDLPDGVYTSRAWLANVHYYFGFFFIQGHLWHALRALGFDFKRVTNAISNIDSATVTLKD</sequence>
<dbReference type="EMBL" id="U57660">
    <property type="protein sequence ID" value="AAC45351.1"/>
    <property type="molecule type" value="Genomic_DNA"/>
</dbReference>
<dbReference type="EMBL" id="BX548174">
    <property type="protein sequence ID" value="CAE19086.1"/>
    <property type="molecule type" value="Genomic_DNA"/>
</dbReference>
<dbReference type="RefSeq" id="WP_011132261.1">
    <property type="nucleotide sequence ID" value="NC_005072.1"/>
</dbReference>
<dbReference type="SMR" id="O07295"/>
<dbReference type="STRING" id="59919.PMM0627"/>
<dbReference type="KEGG" id="pmm:PMM0627"/>
<dbReference type="eggNOG" id="ENOG5033QV9">
    <property type="taxonomic scope" value="Bacteria"/>
</dbReference>
<dbReference type="HOGENOM" id="CLU_028310_0_0_3"/>
<dbReference type="OrthoDB" id="9429529at2"/>
<dbReference type="Proteomes" id="UP000001026">
    <property type="component" value="Chromosome"/>
</dbReference>
<dbReference type="GO" id="GO:0009522">
    <property type="term" value="C:photosystem I"/>
    <property type="evidence" value="ECO:0007669"/>
    <property type="project" value="UniProtKB-KW"/>
</dbReference>
<dbReference type="GO" id="GO:0009523">
    <property type="term" value="C:photosystem II"/>
    <property type="evidence" value="ECO:0007669"/>
    <property type="project" value="UniProtKB-KW"/>
</dbReference>
<dbReference type="GO" id="GO:0031676">
    <property type="term" value="C:plasma membrane-derived thylakoid membrane"/>
    <property type="evidence" value="ECO:0007669"/>
    <property type="project" value="UniProtKB-SubCell"/>
</dbReference>
<dbReference type="GO" id="GO:0016168">
    <property type="term" value="F:chlorophyll binding"/>
    <property type="evidence" value="ECO:0007669"/>
    <property type="project" value="UniProtKB-KW"/>
</dbReference>
<dbReference type="GO" id="GO:0009767">
    <property type="term" value="P:photosynthetic electron transport chain"/>
    <property type="evidence" value="ECO:0007669"/>
    <property type="project" value="InterPro"/>
</dbReference>
<dbReference type="InterPro" id="IPR000932">
    <property type="entry name" value="PS_antenna-like"/>
</dbReference>
<dbReference type="InterPro" id="IPR036001">
    <property type="entry name" value="PS_II_antenna-like_sf"/>
</dbReference>
<dbReference type="NCBIfam" id="TIGR03041">
    <property type="entry name" value="PS_antenn_a_b"/>
    <property type="match status" value="1"/>
</dbReference>
<dbReference type="Pfam" id="PF00421">
    <property type="entry name" value="PSII"/>
    <property type="match status" value="1"/>
</dbReference>
<dbReference type="SUPFAM" id="SSF161077">
    <property type="entry name" value="Photosystem II antenna protein-like"/>
    <property type="match status" value="1"/>
</dbReference>
<evidence type="ECO:0000255" key="1"/>
<evidence type="ECO:0000269" key="2">
    <source>
    </source>
</evidence>
<evidence type="ECO:0000269" key="3">
    <source ref="3"/>
</evidence>
<evidence type="ECO:0000303" key="4">
    <source>
    </source>
</evidence>
<evidence type="ECO:0000303" key="5">
    <source>
    </source>
</evidence>
<evidence type="ECO:0000303" key="6">
    <source ref="3"/>
</evidence>
<evidence type="ECO:0000305" key="7"/>
<evidence type="ECO:0000305" key="8">
    <source>
    </source>
</evidence>
<evidence type="ECO:0000305" key="9">
    <source ref="3"/>
</evidence>
<name>PCBA_PROMP</name>
<organism>
    <name type="scientific">Prochlorococcus marinus subsp. pastoris (strain CCMP1986 / NIES-2087 / MED4)</name>
    <dbReference type="NCBI Taxonomy" id="59919"/>
    <lineage>
        <taxon>Bacteria</taxon>
        <taxon>Bacillati</taxon>
        <taxon>Cyanobacteriota</taxon>
        <taxon>Cyanophyceae</taxon>
        <taxon>Synechococcales</taxon>
        <taxon>Prochlorococcaceae</taxon>
        <taxon>Prochlorococcus</taxon>
    </lineage>
</organism>
<proteinExistence type="evidence at protein level"/>